<feature type="chain" id="PRO_0000150331" description="Cysteine desulfurase">
    <location>
        <begin position="1"/>
        <end position="406"/>
    </location>
</feature>
<feature type="active site" description="Cysteine persulfide intermediate" evidence="1">
    <location>
        <position position="364"/>
    </location>
</feature>
<feature type="modified residue" description="N6-(pyridoxal phosphate)lysine" evidence="1">
    <location>
        <position position="226"/>
    </location>
</feature>
<proteinExistence type="inferred from homology"/>
<reference key="1">
    <citation type="journal article" date="2002" name="Proc. Natl. Acad. Sci. U.S.A.">
        <title>Extensive mosaic structure revealed by the complete genome sequence of uropathogenic Escherichia coli.</title>
        <authorList>
            <person name="Welch R.A."/>
            <person name="Burland V."/>
            <person name="Plunkett G. III"/>
            <person name="Redford P."/>
            <person name="Roesch P."/>
            <person name="Rasko D."/>
            <person name="Buckles E.L."/>
            <person name="Liou S.-R."/>
            <person name="Boutin A."/>
            <person name="Hackett J."/>
            <person name="Stroud D."/>
            <person name="Mayhew G.F."/>
            <person name="Rose D.J."/>
            <person name="Zhou S."/>
            <person name="Schwartz D.C."/>
            <person name="Perna N.T."/>
            <person name="Mobley H.L.T."/>
            <person name="Donnenberg M.S."/>
            <person name="Blattner F.R."/>
        </authorList>
    </citation>
    <scope>NUCLEOTIDE SEQUENCE [LARGE SCALE GENOMIC DNA]</scope>
    <source>
        <strain>CFT073 / ATCC 700928 / UPEC</strain>
    </source>
</reference>
<sequence>MTFSVDKVRADFPVLSREVNGLPLAYLDSAASAQKPSQVIDAEAEFYRHGYAAVHRGIHTLSAQATEKMENVRKRASLFINARSAEELVFVRGTTEGINLVANSWGNSNVRAGDNIIISQMEHHANIVPWQMLCARVGAELRVIPLNPDGTLQLETLPTLFDEKTRLLAITHVSNVLGTENPLAEMITLAHQHGAKVLVDGAQAVMHHPVDVQALDCDFYVFSGHKLYGPTGIGILYVKEALLQEMPPWEGGGSMIATVSLSEGTTWTKAPWRFEAGTPNTGGIIGLGAALEYVSALGLNNIAEYEQNLMHYALSQLAAVPDLTLYGPPDRLGVIAFNLGKHHAYDVGSFLDNYGIAVRTGHHCAMPLMAYYNVPAMCRASLAMYNTHEEVDRLVTGLQRIHRLLG</sequence>
<dbReference type="EC" id="2.8.1.7" evidence="1"/>
<dbReference type="EC" id="4.4.1.16" evidence="1"/>
<dbReference type="EMBL" id="AE014075">
    <property type="protein sequence ID" value="AAN80535.1"/>
    <property type="molecule type" value="Genomic_DNA"/>
</dbReference>
<dbReference type="RefSeq" id="WP_000144571.1">
    <property type="nucleotide sequence ID" value="NZ_CP051263.1"/>
</dbReference>
<dbReference type="SMR" id="Q8FH54"/>
<dbReference type="STRING" id="199310.c2075"/>
<dbReference type="KEGG" id="ecc:c2075"/>
<dbReference type="eggNOG" id="COG0520">
    <property type="taxonomic scope" value="Bacteria"/>
</dbReference>
<dbReference type="HOGENOM" id="CLU_003433_2_5_6"/>
<dbReference type="BioCyc" id="ECOL199310:C2075-MONOMER"/>
<dbReference type="UniPathway" id="UPA00266"/>
<dbReference type="Proteomes" id="UP000001410">
    <property type="component" value="Chromosome"/>
</dbReference>
<dbReference type="GO" id="GO:0005737">
    <property type="term" value="C:cytoplasm"/>
    <property type="evidence" value="ECO:0007669"/>
    <property type="project" value="UniProtKB-SubCell"/>
</dbReference>
<dbReference type="GO" id="GO:0031071">
    <property type="term" value="F:cysteine desulfurase activity"/>
    <property type="evidence" value="ECO:0007669"/>
    <property type="project" value="UniProtKB-UniRule"/>
</dbReference>
<dbReference type="GO" id="GO:0030170">
    <property type="term" value="F:pyridoxal phosphate binding"/>
    <property type="evidence" value="ECO:0007669"/>
    <property type="project" value="InterPro"/>
</dbReference>
<dbReference type="GO" id="GO:0009000">
    <property type="term" value="F:selenocysteine lyase activity"/>
    <property type="evidence" value="ECO:0007669"/>
    <property type="project" value="UniProtKB-UniRule"/>
</dbReference>
<dbReference type="GO" id="GO:0006534">
    <property type="term" value="P:cysteine metabolic process"/>
    <property type="evidence" value="ECO:0007669"/>
    <property type="project" value="InterPro"/>
</dbReference>
<dbReference type="CDD" id="cd06453">
    <property type="entry name" value="SufS_like"/>
    <property type="match status" value="1"/>
</dbReference>
<dbReference type="FunFam" id="3.40.640.10:FF:000042">
    <property type="entry name" value="Cysteine desulfurase"/>
    <property type="match status" value="1"/>
</dbReference>
<dbReference type="Gene3D" id="3.90.1150.10">
    <property type="entry name" value="Aspartate Aminotransferase, domain 1"/>
    <property type="match status" value="1"/>
</dbReference>
<dbReference type="Gene3D" id="3.40.640.10">
    <property type="entry name" value="Type I PLP-dependent aspartate aminotransferase-like (Major domain)"/>
    <property type="match status" value="1"/>
</dbReference>
<dbReference type="HAMAP" id="MF_01831">
    <property type="entry name" value="SufS_aminotrans_5"/>
    <property type="match status" value="1"/>
</dbReference>
<dbReference type="InterPro" id="IPR000192">
    <property type="entry name" value="Aminotrans_V_dom"/>
</dbReference>
<dbReference type="InterPro" id="IPR020578">
    <property type="entry name" value="Aminotrans_V_PyrdxlP_BS"/>
</dbReference>
<dbReference type="InterPro" id="IPR010970">
    <property type="entry name" value="Cys_dSase_SufS"/>
</dbReference>
<dbReference type="InterPro" id="IPR015424">
    <property type="entry name" value="PyrdxlP-dep_Trfase"/>
</dbReference>
<dbReference type="InterPro" id="IPR015421">
    <property type="entry name" value="PyrdxlP-dep_Trfase_major"/>
</dbReference>
<dbReference type="InterPro" id="IPR015422">
    <property type="entry name" value="PyrdxlP-dep_Trfase_small"/>
</dbReference>
<dbReference type="NCBIfam" id="NF006791">
    <property type="entry name" value="PRK09295.1"/>
    <property type="match status" value="1"/>
</dbReference>
<dbReference type="NCBIfam" id="TIGR01979">
    <property type="entry name" value="sufS"/>
    <property type="match status" value="1"/>
</dbReference>
<dbReference type="PANTHER" id="PTHR43586">
    <property type="entry name" value="CYSTEINE DESULFURASE"/>
    <property type="match status" value="1"/>
</dbReference>
<dbReference type="PANTHER" id="PTHR43586:SF25">
    <property type="entry name" value="CYSTEINE DESULFURASE"/>
    <property type="match status" value="1"/>
</dbReference>
<dbReference type="Pfam" id="PF00266">
    <property type="entry name" value="Aminotran_5"/>
    <property type="match status" value="1"/>
</dbReference>
<dbReference type="SUPFAM" id="SSF53383">
    <property type="entry name" value="PLP-dependent transferases"/>
    <property type="match status" value="1"/>
</dbReference>
<dbReference type="PROSITE" id="PS00595">
    <property type="entry name" value="AA_TRANSFER_CLASS_5"/>
    <property type="match status" value="1"/>
</dbReference>
<comment type="function">
    <text evidence="1">Cysteine desulfurases mobilize the sulfur from L-cysteine to yield L-alanine, an essential step in sulfur metabolism for biosynthesis of a variety of sulfur-containing biomolecules. Component of the suf operon, which is activated and required under specific conditions such as oxidative stress and iron limitation. Acts as a potent selenocysteine lyase in vitro, that mobilizes selenium from L-selenocysteine. Selenocysteine lyase activity is however unsure in vivo.</text>
</comment>
<comment type="catalytic activity">
    <reaction evidence="1">
        <text>(sulfur carrier)-H + L-cysteine = (sulfur carrier)-SH + L-alanine</text>
        <dbReference type="Rhea" id="RHEA:43892"/>
        <dbReference type="Rhea" id="RHEA-COMP:14737"/>
        <dbReference type="Rhea" id="RHEA-COMP:14739"/>
        <dbReference type="ChEBI" id="CHEBI:29917"/>
        <dbReference type="ChEBI" id="CHEBI:35235"/>
        <dbReference type="ChEBI" id="CHEBI:57972"/>
        <dbReference type="ChEBI" id="CHEBI:64428"/>
        <dbReference type="EC" id="2.8.1.7"/>
    </reaction>
</comment>
<comment type="catalytic activity">
    <reaction evidence="1">
        <text>L-selenocysteine + AH2 = hydrogenselenide + L-alanine + A + H(+)</text>
        <dbReference type="Rhea" id="RHEA:11632"/>
        <dbReference type="ChEBI" id="CHEBI:13193"/>
        <dbReference type="ChEBI" id="CHEBI:15378"/>
        <dbReference type="ChEBI" id="CHEBI:17499"/>
        <dbReference type="ChEBI" id="CHEBI:29317"/>
        <dbReference type="ChEBI" id="CHEBI:57843"/>
        <dbReference type="ChEBI" id="CHEBI:57972"/>
        <dbReference type="EC" id="4.4.1.16"/>
    </reaction>
</comment>
<comment type="cofactor">
    <cofactor evidence="1">
        <name>pyridoxal 5'-phosphate</name>
        <dbReference type="ChEBI" id="CHEBI:597326"/>
    </cofactor>
</comment>
<comment type="pathway">
    <text evidence="1">Cofactor biosynthesis; iron-sulfur cluster biosynthesis.</text>
</comment>
<comment type="subunit">
    <text evidence="1">Homodimer. Interacts with SufE and the SufBCD complex composed of SufB, SufC and SufD. The interaction with SufE is required to mediate the direct transfer of the sulfur atom from the S-sulfanylcysteine.</text>
</comment>
<comment type="subcellular location">
    <subcellularLocation>
        <location evidence="1">Cytoplasm</location>
    </subcellularLocation>
</comment>
<comment type="similarity">
    <text evidence="1">Belongs to the class-V pyridoxal-phosphate-dependent aminotransferase family. Csd subfamily.</text>
</comment>
<protein>
    <recommendedName>
        <fullName evidence="1">Cysteine desulfurase</fullName>
        <ecNumber evidence="1">2.8.1.7</ecNumber>
    </recommendedName>
    <alternativeName>
        <fullName evidence="1">Selenocysteine beta-lyase</fullName>
        <shortName evidence="1">SCL</shortName>
    </alternativeName>
    <alternativeName>
        <fullName evidence="1">Selenocysteine lyase</fullName>
        <ecNumber evidence="1">4.4.1.16</ecNumber>
    </alternativeName>
    <alternativeName>
        <fullName evidence="1">Selenocysteine reductase</fullName>
    </alternativeName>
</protein>
<gene>
    <name evidence="1" type="primary">sufS</name>
    <name type="ordered locus">c2075</name>
</gene>
<accession>Q8FH54</accession>
<evidence type="ECO:0000255" key="1">
    <source>
        <dbReference type="HAMAP-Rule" id="MF_01831"/>
    </source>
</evidence>
<name>SUFS_ECOL6</name>
<organism>
    <name type="scientific">Escherichia coli O6:H1 (strain CFT073 / ATCC 700928 / UPEC)</name>
    <dbReference type="NCBI Taxonomy" id="199310"/>
    <lineage>
        <taxon>Bacteria</taxon>
        <taxon>Pseudomonadati</taxon>
        <taxon>Pseudomonadota</taxon>
        <taxon>Gammaproteobacteria</taxon>
        <taxon>Enterobacterales</taxon>
        <taxon>Enterobacteriaceae</taxon>
        <taxon>Escherichia</taxon>
    </lineage>
</organism>
<keyword id="KW-0963">Cytoplasm</keyword>
<keyword id="KW-0456">Lyase</keyword>
<keyword id="KW-0663">Pyridoxal phosphate</keyword>
<keyword id="KW-1185">Reference proteome</keyword>
<keyword id="KW-0808">Transferase</keyword>